<reference key="1">
    <citation type="journal article" date="1999" name="Nature">
        <title>Sequence and analysis of chromosome 4 of the plant Arabidopsis thaliana.</title>
        <authorList>
            <person name="Mayer K.F.X."/>
            <person name="Schueller C."/>
            <person name="Wambutt R."/>
            <person name="Murphy G."/>
            <person name="Volckaert G."/>
            <person name="Pohl T."/>
            <person name="Duesterhoeft A."/>
            <person name="Stiekema W."/>
            <person name="Entian K.-D."/>
            <person name="Terryn N."/>
            <person name="Harris B."/>
            <person name="Ansorge W."/>
            <person name="Brandt P."/>
            <person name="Grivell L.A."/>
            <person name="Rieger M."/>
            <person name="Weichselgartner M."/>
            <person name="de Simone V."/>
            <person name="Obermaier B."/>
            <person name="Mache R."/>
            <person name="Mueller M."/>
            <person name="Kreis M."/>
            <person name="Delseny M."/>
            <person name="Puigdomenech P."/>
            <person name="Watson M."/>
            <person name="Schmidtheini T."/>
            <person name="Reichert B."/>
            <person name="Portetelle D."/>
            <person name="Perez-Alonso M."/>
            <person name="Boutry M."/>
            <person name="Bancroft I."/>
            <person name="Vos P."/>
            <person name="Hoheisel J."/>
            <person name="Zimmermann W."/>
            <person name="Wedler H."/>
            <person name="Ridley P."/>
            <person name="Langham S.-A."/>
            <person name="McCullagh B."/>
            <person name="Bilham L."/>
            <person name="Robben J."/>
            <person name="van der Schueren J."/>
            <person name="Grymonprez B."/>
            <person name="Chuang Y.-J."/>
            <person name="Vandenbussche F."/>
            <person name="Braeken M."/>
            <person name="Weltjens I."/>
            <person name="Voet M."/>
            <person name="Bastiaens I."/>
            <person name="Aert R."/>
            <person name="Defoor E."/>
            <person name="Weitzenegger T."/>
            <person name="Bothe G."/>
            <person name="Ramsperger U."/>
            <person name="Hilbert H."/>
            <person name="Braun M."/>
            <person name="Holzer E."/>
            <person name="Brandt A."/>
            <person name="Peters S."/>
            <person name="van Staveren M."/>
            <person name="Dirkse W."/>
            <person name="Mooijman P."/>
            <person name="Klein Lankhorst R."/>
            <person name="Rose M."/>
            <person name="Hauf J."/>
            <person name="Koetter P."/>
            <person name="Berneiser S."/>
            <person name="Hempel S."/>
            <person name="Feldpausch M."/>
            <person name="Lamberth S."/>
            <person name="Van den Daele H."/>
            <person name="De Keyser A."/>
            <person name="Buysshaert C."/>
            <person name="Gielen J."/>
            <person name="Villarroel R."/>
            <person name="De Clercq R."/>
            <person name="van Montagu M."/>
            <person name="Rogers J."/>
            <person name="Cronin A."/>
            <person name="Quail M.A."/>
            <person name="Bray-Allen S."/>
            <person name="Clark L."/>
            <person name="Doggett J."/>
            <person name="Hall S."/>
            <person name="Kay M."/>
            <person name="Lennard N."/>
            <person name="McLay K."/>
            <person name="Mayes R."/>
            <person name="Pettett A."/>
            <person name="Rajandream M.A."/>
            <person name="Lyne M."/>
            <person name="Benes V."/>
            <person name="Rechmann S."/>
            <person name="Borkova D."/>
            <person name="Bloecker H."/>
            <person name="Scharfe M."/>
            <person name="Grimm M."/>
            <person name="Loehnert T.-H."/>
            <person name="Dose S."/>
            <person name="de Haan M."/>
            <person name="Maarse A.C."/>
            <person name="Schaefer M."/>
            <person name="Mueller-Auer S."/>
            <person name="Gabel C."/>
            <person name="Fuchs M."/>
            <person name="Fartmann B."/>
            <person name="Granderath K."/>
            <person name="Dauner D."/>
            <person name="Herzl A."/>
            <person name="Neumann S."/>
            <person name="Argiriou A."/>
            <person name="Vitale D."/>
            <person name="Liguori R."/>
            <person name="Piravandi E."/>
            <person name="Massenet O."/>
            <person name="Quigley F."/>
            <person name="Clabauld G."/>
            <person name="Muendlein A."/>
            <person name="Felber R."/>
            <person name="Schnabl S."/>
            <person name="Hiller R."/>
            <person name="Schmidt W."/>
            <person name="Lecharny A."/>
            <person name="Aubourg S."/>
            <person name="Chefdor F."/>
            <person name="Cooke R."/>
            <person name="Berger C."/>
            <person name="Monfort A."/>
            <person name="Casacuberta E."/>
            <person name="Gibbons T."/>
            <person name="Weber N."/>
            <person name="Vandenbol M."/>
            <person name="Bargues M."/>
            <person name="Terol J."/>
            <person name="Torres A."/>
            <person name="Perez-Perez A."/>
            <person name="Purnelle B."/>
            <person name="Bent E."/>
            <person name="Johnson S."/>
            <person name="Tacon D."/>
            <person name="Jesse T."/>
            <person name="Heijnen L."/>
            <person name="Schwarz S."/>
            <person name="Scholler P."/>
            <person name="Heber S."/>
            <person name="Francs P."/>
            <person name="Bielke C."/>
            <person name="Frishman D."/>
            <person name="Haase D."/>
            <person name="Lemcke K."/>
            <person name="Mewes H.-W."/>
            <person name="Stocker S."/>
            <person name="Zaccaria P."/>
            <person name="Bevan M."/>
            <person name="Wilson R.K."/>
            <person name="de la Bastide M."/>
            <person name="Habermann K."/>
            <person name="Parnell L."/>
            <person name="Dedhia N."/>
            <person name="Gnoj L."/>
            <person name="Schutz K."/>
            <person name="Huang E."/>
            <person name="Spiegel L."/>
            <person name="Sekhon M."/>
            <person name="Murray J."/>
            <person name="Sheet P."/>
            <person name="Cordes M."/>
            <person name="Abu-Threideh J."/>
            <person name="Stoneking T."/>
            <person name="Kalicki J."/>
            <person name="Graves T."/>
            <person name="Harmon G."/>
            <person name="Edwards J."/>
            <person name="Latreille P."/>
            <person name="Courtney L."/>
            <person name="Cloud J."/>
            <person name="Abbott A."/>
            <person name="Scott K."/>
            <person name="Johnson D."/>
            <person name="Minx P."/>
            <person name="Bentley D."/>
            <person name="Fulton B."/>
            <person name="Miller N."/>
            <person name="Greco T."/>
            <person name="Kemp K."/>
            <person name="Kramer J."/>
            <person name="Fulton L."/>
            <person name="Mardis E."/>
            <person name="Dante M."/>
            <person name="Pepin K."/>
            <person name="Hillier L.W."/>
            <person name="Nelson J."/>
            <person name="Spieth J."/>
            <person name="Ryan E."/>
            <person name="Andrews S."/>
            <person name="Geisel C."/>
            <person name="Layman D."/>
            <person name="Du H."/>
            <person name="Ali J."/>
            <person name="Berghoff A."/>
            <person name="Jones K."/>
            <person name="Drone K."/>
            <person name="Cotton M."/>
            <person name="Joshu C."/>
            <person name="Antonoiu B."/>
            <person name="Zidanic M."/>
            <person name="Strong C."/>
            <person name="Sun H."/>
            <person name="Lamar B."/>
            <person name="Yordan C."/>
            <person name="Ma P."/>
            <person name="Zhong J."/>
            <person name="Preston R."/>
            <person name="Vil D."/>
            <person name="Shekher M."/>
            <person name="Matero A."/>
            <person name="Shah R."/>
            <person name="Swaby I.K."/>
            <person name="O'Shaughnessy A."/>
            <person name="Rodriguez M."/>
            <person name="Hoffman J."/>
            <person name="Till S."/>
            <person name="Granat S."/>
            <person name="Shohdy N."/>
            <person name="Hasegawa A."/>
            <person name="Hameed A."/>
            <person name="Lodhi M."/>
            <person name="Johnson A."/>
            <person name="Chen E."/>
            <person name="Marra M.A."/>
            <person name="Martienssen R."/>
            <person name="McCombie W.R."/>
        </authorList>
    </citation>
    <scope>NUCLEOTIDE SEQUENCE [LARGE SCALE GENOMIC DNA]</scope>
    <source>
        <strain>cv. Columbia</strain>
    </source>
</reference>
<reference key="2">
    <citation type="journal article" date="2017" name="Plant J.">
        <title>Araport11: a complete reannotation of the Arabidopsis thaliana reference genome.</title>
        <authorList>
            <person name="Cheng C.Y."/>
            <person name="Krishnakumar V."/>
            <person name="Chan A.P."/>
            <person name="Thibaud-Nissen F."/>
            <person name="Schobel S."/>
            <person name="Town C.D."/>
        </authorList>
    </citation>
    <scope>GENOME REANNOTATION</scope>
    <source>
        <strain>cv. Columbia</strain>
    </source>
</reference>
<reference key="3">
    <citation type="journal article" date="2002" name="Science">
        <title>Functional annotation of a full-length Arabidopsis cDNA collection.</title>
        <authorList>
            <person name="Seki M."/>
            <person name="Narusaka M."/>
            <person name="Kamiya A."/>
            <person name="Ishida J."/>
            <person name="Satou M."/>
            <person name="Sakurai T."/>
            <person name="Nakajima M."/>
            <person name="Enju A."/>
            <person name="Akiyama K."/>
            <person name="Oono Y."/>
            <person name="Muramatsu M."/>
            <person name="Hayashizaki Y."/>
            <person name="Kawai J."/>
            <person name="Carninci P."/>
            <person name="Itoh M."/>
            <person name="Ishii Y."/>
            <person name="Arakawa T."/>
            <person name="Shibata K."/>
            <person name="Shinagawa A."/>
            <person name="Shinozaki K."/>
        </authorList>
    </citation>
    <scope>NUCLEOTIDE SEQUENCE [LARGE SCALE MRNA]</scope>
    <source>
        <strain>cv. Columbia</strain>
    </source>
</reference>
<reference key="4">
    <citation type="journal article" date="2003" name="Science">
        <title>Empirical analysis of transcriptional activity in the Arabidopsis genome.</title>
        <authorList>
            <person name="Yamada K."/>
            <person name="Lim J."/>
            <person name="Dale J.M."/>
            <person name="Chen H."/>
            <person name="Shinn P."/>
            <person name="Palm C.J."/>
            <person name="Southwick A.M."/>
            <person name="Wu H.C."/>
            <person name="Kim C.J."/>
            <person name="Nguyen M."/>
            <person name="Pham P.K."/>
            <person name="Cheuk R.F."/>
            <person name="Karlin-Newmann G."/>
            <person name="Liu S.X."/>
            <person name="Lam B."/>
            <person name="Sakano H."/>
            <person name="Wu T."/>
            <person name="Yu G."/>
            <person name="Miranda M."/>
            <person name="Quach H.L."/>
            <person name="Tripp M."/>
            <person name="Chang C.H."/>
            <person name="Lee J.M."/>
            <person name="Toriumi M.J."/>
            <person name="Chan M.M."/>
            <person name="Tang C.C."/>
            <person name="Onodera C.S."/>
            <person name="Deng J.M."/>
            <person name="Akiyama K."/>
            <person name="Ansari Y."/>
            <person name="Arakawa T."/>
            <person name="Banh J."/>
            <person name="Banno F."/>
            <person name="Bowser L."/>
            <person name="Brooks S.Y."/>
            <person name="Carninci P."/>
            <person name="Chao Q."/>
            <person name="Choy N."/>
            <person name="Enju A."/>
            <person name="Goldsmith A.D."/>
            <person name="Gurjal M."/>
            <person name="Hansen N.F."/>
            <person name="Hayashizaki Y."/>
            <person name="Johnson-Hopson C."/>
            <person name="Hsuan V.W."/>
            <person name="Iida K."/>
            <person name="Karnes M."/>
            <person name="Khan S."/>
            <person name="Koesema E."/>
            <person name="Ishida J."/>
            <person name="Jiang P.X."/>
            <person name="Jones T."/>
            <person name="Kawai J."/>
            <person name="Kamiya A."/>
            <person name="Meyers C."/>
            <person name="Nakajima M."/>
            <person name="Narusaka M."/>
            <person name="Seki M."/>
            <person name="Sakurai T."/>
            <person name="Satou M."/>
            <person name="Tamse R."/>
            <person name="Vaysberg M."/>
            <person name="Wallender E.K."/>
            <person name="Wong C."/>
            <person name="Yamamura Y."/>
            <person name="Yuan S."/>
            <person name="Shinozaki K."/>
            <person name="Davis R.W."/>
            <person name="Theologis A."/>
            <person name="Ecker J.R."/>
        </authorList>
    </citation>
    <scope>NUCLEOTIDE SEQUENCE [LARGE SCALE MRNA]</scope>
    <source>
        <strain>cv. Columbia</strain>
    </source>
</reference>
<reference key="5">
    <citation type="journal article" date="2004" name="Plant Cell">
        <title>Genome-wide analysis of Arabidopsis pentatricopeptide repeat proteins reveals their essential role in organelle biogenesis.</title>
        <authorList>
            <person name="Lurin C."/>
            <person name="Andres C."/>
            <person name="Aubourg S."/>
            <person name="Bellaoui M."/>
            <person name="Bitton F."/>
            <person name="Bruyere C."/>
            <person name="Caboche M."/>
            <person name="Debast C."/>
            <person name="Gualberto J."/>
            <person name="Hoffmann B."/>
            <person name="Lecharny A."/>
            <person name="Le Ret M."/>
            <person name="Martin-Magniette M.-L."/>
            <person name="Mireau H."/>
            <person name="Peeters N."/>
            <person name="Renou J.-P."/>
            <person name="Szurek B."/>
            <person name="Taconnat L."/>
            <person name="Small I."/>
        </authorList>
    </citation>
    <scope>GENE FAMILY</scope>
</reference>
<dbReference type="EMBL" id="AL035538">
    <property type="protein sequence ID" value="CAB37555.1"/>
    <property type="molecule type" value="Genomic_DNA"/>
</dbReference>
<dbReference type="EMBL" id="AL161593">
    <property type="protein sequence ID" value="CAB80480.1"/>
    <property type="molecule type" value="Genomic_DNA"/>
</dbReference>
<dbReference type="EMBL" id="CP002687">
    <property type="protein sequence ID" value="AEE86884.1"/>
    <property type="molecule type" value="Genomic_DNA"/>
</dbReference>
<dbReference type="EMBL" id="CP002687">
    <property type="protein sequence ID" value="AEE86885.1"/>
    <property type="molecule type" value="Genomic_DNA"/>
</dbReference>
<dbReference type="EMBL" id="CP002687">
    <property type="protein sequence ID" value="ANM67822.1"/>
    <property type="molecule type" value="Genomic_DNA"/>
</dbReference>
<dbReference type="EMBL" id="AK119139">
    <property type="protein sequence ID" value="BAC43709.1"/>
    <property type="molecule type" value="mRNA"/>
</dbReference>
<dbReference type="EMBL" id="AY075695">
    <property type="protein sequence ID" value="AAL77701.1"/>
    <property type="molecule type" value="mRNA"/>
</dbReference>
<dbReference type="EMBL" id="AY143852">
    <property type="protein sequence ID" value="AAN28791.1"/>
    <property type="molecule type" value="mRNA"/>
</dbReference>
<dbReference type="PIR" id="T05642">
    <property type="entry name" value="T05642"/>
</dbReference>
<dbReference type="RefSeq" id="NP_001031806.1">
    <property type="nucleotide sequence ID" value="NM_001036729.1"/>
</dbReference>
<dbReference type="RefSeq" id="NP_001320158.1">
    <property type="nucleotide sequence ID" value="NM_001342482.1"/>
</dbReference>
<dbReference type="RefSeq" id="NP_195528.1">
    <property type="nucleotide sequence ID" value="NM_119976.5"/>
</dbReference>
<dbReference type="SMR" id="Q9SZL5"/>
<dbReference type="BioGRID" id="15251">
    <property type="interactions" value="1"/>
</dbReference>
<dbReference type="FunCoup" id="Q9SZL5">
    <property type="interactions" value="92"/>
</dbReference>
<dbReference type="IntAct" id="Q9SZL5">
    <property type="interactions" value="1"/>
</dbReference>
<dbReference type="iPTMnet" id="Q9SZL5"/>
<dbReference type="PaxDb" id="3702-AT4G38150.1"/>
<dbReference type="ProteomicsDB" id="248998"/>
<dbReference type="EnsemblPlants" id="AT4G38150.1">
    <property type="protein sequence ID" value="AT4G38150.1"/>
    <property type="gene ID" value="AT4G38150"/>
</dbReference>
<dbReference type="EnsemblPlants" id="AT4G38150.2">
    <property type="protein sequence ID" value="AT4G38150.2"/>
    <property type="gene ID" value="AT4G38150"/>
</dbReference>
<dbReference type="EnsemblPlants" id="AT4G38150.3">
    <property type="protein sequence ID" value="AT4G38150.3"/>
    <property type="gene ID" value="AT4G38150"/>
</dbReference>
<dbReference type="GeneID" id="829971"/>
<dbReference type="Gramene" id="AT4G38150.1">
    <property type="protein sequence ID" value="AT4G38150.1"/>
    <property type="gene ID" value="AT4G38150"/>
</dbReference>
<dbReference type="Gramene" id="AT4G38150.2">
    <property type="protein sequence ID" value="AT4G38150.2"/>
    <property type="gene ID" value="AT4G38150"/>
</dbReference>
<dbReference type="Gramene" id="AT4G38150.3">
    <property type="protein sequence ID" value="AT4G38150.3"/>
    <property type="gene ID" value="AT4G38150"/>
</dbReference>
<dbReference type="KEGG" id="ath:AT4G38150"/>
<dbReference type="Araport" id="AT4G38150"/>
<dbReference type="TAIR" id="AT4G38150"/>
<dbReference type="eggNOG" id="KOG4197">
    <property type="taxonomic scope" value="Eukaryota"/>
</dbReference>
<dbReference type="HOGENOM" id="CLU_058924_1_1_1"/>
<dbReference type="InParanoid" id="Q9SZL5"/>
<dbReference type="OMA" id="CKAHKIE"/>
<dbReference type="PhylomeDB" id="Q9SZL5"/>
<dbReference type="PRO" id="PR:Q9SZL5"/>
<dbReference type="Proteomes" id="UP000006548">
    <property type="component" value="Chromosome 4"/>
</dbReference>
<dbReference type="ExpressionAtlas" id="Q9SZL5">
    <property type="expression patterns" value="baseline and differential"/>
</dbReference>
<dbReference type="Gene3D" id="1.25.40.10">
    <property type="entry name" value="Tetratricopeptide repeat domain"/>
    <property type="match status" value="1"/>
</dbReference>
<dbReference type="InterPro" id="IPR002885">
    <property type="entry name" value="Pentatricopeptide_rpt"/>
</dbReference>
<dbReference type="InterPro" id="IPR011990">
    <property type="entry name" value="TPR-like_helical_dom_sf"/>
</dbReference>
<dbReference type="NCBIfam" id="TIGR00756">
    <property type="entry name" value="PPR"/>
    <property type="match status" value="3"/>
</dbReference>
<dbReference type="PANTHER" id="PTHR47447">
    <property type="entry name" value="OS03G0856100 PROTEIN"/>
    <property type="match status" value="1"/>
</dbReference>
<dbReference type="PANTHER" id="PTHR47447:SF22">
    <property type="entry name" value="TETRATRICOPEPTIDE-LIKE HELICAL DOMAIN SUPERFAMILY"/>
    <property type="match status" value="1"/>
</dbReference>
<dbReference type="Pfam" id="PF01535">
    <property type="entry name" value="PPR"/>
    <property type="match status" value="1"/>
</dbReference>
<dbReference type="Pfam" id="PF13041">
    <property type="entry name" value="PPR_2"/>
    <property type="match status" value="1"/>
</dbReference>
<dbReference type="PROSITE" id="PS51375">
    <property type="entry name" value="PPR"/>
    <property type="match status" value="4"/>
</dbReference>
<evidence type="ECO:0000256" key="1">
    <source>
        <dbReference type="SAM" id="MobiDB-lite"/>
    </source>
</evidence>
<evidence type="ECO:0000305" key="2"/>
<proteinExistence type="evidence at transcript level"/>
<sequence length="302" mass="33454">MVPSSKAVVFARQMAKQIRVTTPSMSATRFLSTGDNGQVDEQQNPPEPLPNRPLRGERSSNSHREPPARQAHNLGKSDTTLSDDGFLEQFKLGVNQDSRETPKPEQYPQEPLPPPEDSDEIFKKMKEGGLIPNAVAMLDGLCKDGLVQEAMKLFGLMRDKGTIPEVVIYTAVVEAFCKAHKIEDAKRIFRKMQNNGIAPNAFSYGVLVQGLYNCNMLDDAVAFCSEMLESGHSPNVPTFVELVDALCRVKGVEQAQSAIDTLNQKGFAVNVKAVKEFMDKRAPFPSLAWEAIFKKKPTEKPF</sequence>
<name>PP356_ARATH</name>
<accession>Q9SZL5</accession>
<accession>Q8S9H9</accession>
<feature type="chain" id="PRO_0000363473" description="Pentatricopeptide repeat-containing protein At4g38150">
    <location>
        <begin position="1"/>
        <end position="302"/>
    </location>
</feature>
<feature type="repeat" description="PPR 1">
    <location>
        <begin position="130"/>
        <end position="164"/>
    </location>
</feature>
<feature type="repeat" description="PPR 2">
    <location>
        <begin position="165"/>
        <end position="199"/>
    </location>
</feature>
<feature type="repeat" description="PPR 3">
    <location>
        <begin position="200"/>
        <end position="234"/>
    </location>
</feature>
<feature type="repeat" description="PPR 4">
    <location>
        <begin position="235"/>
        <end position="269"/>
    </location>
</feature>
<feature type="region of interest" description="Disordered" evidence="1">
    <location>
        <begin position="26"/>
        <end position="82"/>
    </location>
</feature>
<feature type="region of interest" description="Disordered" evidence="1">
    <location>
        <begin position="94"/>
        <end position="116"/>
    </location>
</feature>
<feature type="compositionally biased region" description="Polar residues" evidence="1">
    <location>
        <begin position="26"/>
        <end position="40"/>
    </location>
</feature>
<feature type="compositionally biased region" description="Basic and acidic residues" evidence="1">
    <location>
        <begin position="54"/>
        <end position="67"/>
    </location>
</feature>
<feature type="sequence conflict" description="In Ref. 4; AAN28791/AAL77701." evidence="2" ref="4">
    <original>E</original>
    <variation>D</variation>
    <location>
        <position position="226"/>
    </location>
</feature>
<organism>
    <name type="scientific">Arabidopsis thaliana</name>
    <name type="common">Mouse-ear cress</name>
    <dbReference type="NCBI Taxonomy" id="3702"/>
    <lineage>
        <taxon>Eukaryota</taxon>
        <taxon>Viridiplantae</taxon>
        <taxon>Streptophyta</taxon>
        <taxon>Embryophyta</taxon>
        <taxon>Tracheophyta</taxon>
        <taxon>Spermatophyta</taxon>
        <taxon>Magnoliopsida</taxon>
        <taxon>eudicotyledons</taxon>
        <taxon>Gunneridae</taxon>
        <taxon>Pentapetalae</taxon>
        <taxon>rosids</taxon>
        <taxon>malvids</taxon>
        <taxon>Brassicales</taxon>
        <taxon>Brassicaceae</taxon>
        <taxon>Camelineae</taxon>
        <taxon>Arabidopsis</taxon>
    </lineage>
</organism>
<comment type="similarity">
    <text evidence="2">Belongs to the PPR family. P subfamily.</text>
</comment>
<comment type="online information" name="Pentatricopeptide repeat proteins">
    <link uri="https://ppr.plantenergy.uwa.edu.au"/>
</comment>
<protein>
    <recommendedName>
        <fullName>Pentatricopeptide repeat-containing protein At4g38150</fullName>
    </recommendedName>
</protein>
<keyword id="KW-1185">Reference proteome</keyword>
<keyword id="KW-0677">Repeat</keyword>
<gene>
    <name type="ordered locus">At4g38150</name>
    <name type="ORF">F20D10.270</name>
</gene>